<evidence type="ECO:0000255" key="1"/>
<evidence type="ECO:0000269" key="2">
    <source>
    </source>
</evidence>
<evidence type="ECO:0000269" key="3">
    <source>
    </source>
</evidence>
<evidence type="ECO:0000269" key="4">
    <source>
    </source>
</evidence>
<evidence type="ECO:0000269" key="5">
    <source>
    </source>
</evidence>
<evidence type="ECO:0000305" key="6"/>
<keyword id="KW-0997">Cell inner membrane</keyword>
<keyword id="KW-1003">Cell membrane</keyword>
<keyword id="KW-0378">Hydrolase</keyword>
<keyword id="KW-0442">Lipid degradation</keyword>
<keyword id="KW-0443">Lipid metabolism</keyword>
<keyword id="KW-0460">Magnesium</keyword>
<keyword id="KW-0472">Membrane</keyword>
<keyword id="KW-0479">Metal-binding</keyword>
<keyword id="KW-0595">Phospholipid degradation</keyword>
<keyword id="KW-1208">Phospholipid metabolism</keyword>
<keyword id="KW-1185">Reference proteome</keyword>
<keyword id="KW-0812">Transmembrane</keyword>
<keyword id="KW-1133">Transmembrane helix</keyword>
<proteinExistence type="evidence at protein level"/>
<organism>
    <name type="scientific">Escherichia coli (strain K12)</name>
    <dbReference type="NCBI Taxonomy" id="83333"/>
    <lineage>
        <taxon>Bacteria</taxon>
        <taxon>Pseudomonadati</taxon>
        <taxon>Pseudomonadota</taxon>
        <taxon>Gammaproteobacteria</taxon>
        <taxon>Enterobacterales</taxon>
        <taxon>Enterobacteriaceae</taxon>
        <taxon>Escherichia</taxon>
    </lineage>
</organism>
<gene>
    <name type="primary">pgpA</name>
    <name type="synonym">yajN</name>
    <name type="ordered locus">b0418</name>
    <name type="ordered locus">JW0408</name>
</gene>
<feature type="chain" id="PRO_0000058359" description="Phosphatidylglycerophosphatase A">
    <location>
        <begin position="1"/>
        <end position="172"/>
    </location>
</feature>
<feature type="topological domain" description="Cytoplasmic" evidence="1">
    <location>
        <begin position="1"/>
        <end position="31"/>
    </location>
</feature>
<feature type="transmembrane region" description="Helical" evidence="1">
    <location>
        <begin position="32"/>
        <end position="52"/>
    </location>
</feature>
<feature type="topological domain" description="Periplasmic" evidence="1">
    <location>
        <position position="53"/>
    </location>
</feature>
<feature type="transmembrane region" description="Helical" evidence="1">
    <location>
        <begin position="54"/>
        <end position="74"/>
    </location>
</feature>
<feature type="topological domain" description="Cytoplasmic" evidence="1">
    <location>
        <begin position="75"/>
        <end position="141"/>
    </location>
</feature>
<feature type="transmembrane region" description="Helical" evidence="1">
    <location>
        <begin position="142"/>
        <end position="162"/>
    </location>
</feature>
<feature type="topological domain" description="Periplasmic" evidence="1">
    <location>
        <begin position="163"/>
        <end position="172"/>
    </location>
</feature>
<reference key="1">
    <citation type="journal article" date="1988" name="J. Bacteriol.">
        <title>Membrane-bound phosphatases in Escherichia coli: sequence of the pgpA gene.</title>
        <authorList>
            <person name="Icho T."/>
        </authorList>
    </citation>
    <scope>NUCLEOTIDE SEQUENCE [GENOMIC DNA]</scope>
    <scope>FUNCTION</scope>
    <scope>CATALYTIC ACTIVITY</scope>
    <scope>DISRUPTION PHENOTYPE</scope>
    <source>
        <strain>K12</strain>
    </source>
</reference>
<reference key="2">
    <citation type="submission" date="1997-08" db="EMBL/GenBank/DDBJ databases">
        <authorList>
            <person name="Iida A."/>
            <person name="Hayashi M."/>
            <person name="Fujio T."/>
            <person name="Teshiba S."/>
        </authorList>
    </citation>
    <scope>NUCLEOTIDE SEQUENCE [GENOMIC DNA]</scope>
    <source>
        <strain>K12 / W3110 / ATCC 27325 / DSM 5911</strain>
    </source>
</reference>
<reference key="3">
    <citation type="submission" date="1997-01" db="EMBL/GenBank/DDBJ databases">
        <title>Sequence of minutes 4-25 of Escherichia coli.</title>
        <authorList>
            <person name="Chung E."/>
            <person name="Allen E."/>
            <person name="Araujo R."/>
            <person name="Aparicio A.M."/>
            <person name="Davis K."/>
            <person name="Duncan M."/>
            <person name="Federspiel N."/>
            <person name="Hyman R."/>
            <person name="Kalman S."/>
            <person name="Komp C."/>
            <person name="Kurdi O."/>
            <person name="Lew H."/>
            <person name="Lin D."/>
            <person name="Namath A."/>
            <person name="Oefner P."/>
            <person name="Roberts D."/>
            <person name="Schramm S."/>
            <person name="Davis R.W."/>
        </authorList>
    </citation>
    <scope>NUCLEOTIDE SEQUENCE [LARGE SCALE GENOMIC DNA]</scope>
    <source>
        <strain>K12 / MG1655 / ATCC 47076</strain>
    </source>
</reference>
<reference key="4">
    <citation type="journal article" date="1997" name="Science">
        <title>The complete genome sequence of Escherichia coli K-12.</title>
        <authorList>
            <person name="Blattner F.R."/>
            <person name="Plunkett G. III"/>
            <person name="Bloch C.A."/>
            <person name="Perna N.T."/>
            <person name="Burland V."/>
            <person name="Riley M."/>
            <person name="Collado-Vides J."/>
            <person name="Glasner J.D."/>
            <person name="Rode C.K."/>
            <person name="Mayhew G.F."/>
            <person name="Gregor J."/>
            <person name="Davis N.W."/>
            <person name="Kirkpatrick H.A."/>
            <person name="Goeden M.A."/>
            <person name="Rose D.J."/>
            <person name="Mau B."/>
            <person name="Shao Y."/>
        </authorList>
    </citation>
    <scope>NUCLEOTIDE SEQUENCE [LARGE SCALE GENOMIC DNA]</scope>
    <source>
        <strain>K12 / MG1655 / ATCC 47076</strain>
    </source>
</reference>
<reference key="5">
    <citation type="journal article" date="2006" name="Mol. Syst. Biol.">
        <title>Highly accurate genome sequences of Escherichia coli K-12 strains MG1655 and W3110.</title>
        <authorList>
            <person name="Hayashi K."/>
            <person name="Morooka N."/>
            <person name="Yamamoto Y."/>
            <person name="Fujita K."/>
            <person name="Isono K."/>
            <person name="Choi S."/>
            <person name="Ohtsubo E."/>
            <person name="Baba T."/>
            <person name="Wanner B.L."/>
            <person name="Mori H."/>
            <person name="Horiuchi T."/>
        </authorList>
    </citation>
    <scope>NUCLEOTIDE SEQUENCE [LARGE SCALE GENOMIC DNA]</scope>
    <source>
        <strain>K12 / W3110 / ATCC 27325 / DSM 5911</strain>
    </source>
</reference>
<reference key="6">
    <citation type="journal article" date="1983" name="J. Bacteriol.">
        <title>Multiple genes for membrane-bound phosphatases in Escherichia coli and their action on phospholipid precursors.</title>
        <authorList>
            <person name="Icho T."/>
            <person name="Raetz C.R."/>
        </authorList>
    </citation>
    <scope>FUNCTION</scope>
    <scope>CATALYTIC ACTIVITY</scope>
    <scope>DISRUPTION PHENOTYPE</scope>
    <source>
        <strain>K12</strain>
    </source>
</reference>
<reference key="7">
    <citation type="journal article" date="2005" name="Science">
        <title>Global topology analysis of the Escherichia coli inner membrane proteome.</title>
        <authorList>
            <person name="Daley D.O."/>
            <person name="Rapp M."/>
            <person name="Granseth E."/>
            <person name="Melen K."/>
            <person name="Drew D."/>
            <person name="von Heijne G."/>
        </authorList>
    </citation>
    <scope>TOPOLOGY [LARGE SCALE ANALYSIS]</scope>
    <source>
        <strain>K12 / MG1655 / ATCC 47076</strain>
    </source>
</reference>
<reference key="8">
    <citation type="journal article" date="2010" name="EMBO J.">
        <title>A mitochondrial phosphatase required for cardiolipin biosynthesis: the PGP phosphatase Gep4.</title>
        <authorList>
            <person name="Osman C."/>
            <person name="Haag M."/>
            <person name="Wieland F.T."/>
            <person name="Brugger B."/>
            <person name="Langer T."/>
        </authorList>
    </citation>
    <scope>FUNCTION</scope>
    <scope>CATALYTIC ACTIVITY</scope>
</reference>
<reference key="9">
    <citation type="journal article" date="2011" name="J. Biol. Chem.">
        <title>Three phosphatidylglycerol-phosphate phosphatases in the inner membrane of Escherichia coli.</title>
        <authorList>
            <person name="Lu Y.H."/>
            <person name="Guan Z."/>
            <person name="Zhao J."/>
            <person name="Raetz C.R."/>
        </authorList>
    </citation>
    <scope>FUNCTION</scope>
    <scope>CATALYTIC ACTIVITY</scope>
    <scope>COFACTOR</scope>
    <scope>SUBCELLULAR LOCATION</scope>
    <scope>DISRUPTION PHENOTYPE</scope>
    <source>
        <strain>K12 / W3110 / ATCC 27325 / DSM 5911</strain>
    </source>
</reference>
<dbReference type="EC" id="3.1.3.27"/>
<dbReference type="EMBL" id="M23546">
    <property type="protein sequence ID" value="AAA24325.1"/>
    <property type="status" value="ALT_SEQ"/>
    <property type="molecule type" value="Genomic_DNA"/>
</dbReference>
<dbReference type="EMBL" id="D17333">
    <property type="protein sequence ID" value="BAA21779.1"/>
    <property type="molecule type" value="Genomic_DNA"/>
</dbReference>
<dbReference type="EMBL" id="U82664">
    <property type="protein sequence ID" value="AAB40174.1"/>
    <property type="molecule type" value="Genomic_DNA"/>
</dbReference>
<dbReference type="EMBL" id="U00096">
    <property type="protein sequence ID" value="AAC73521.1"/>
    <property type="molecule type" value="Genomic_DNA"/>
</dbReference>
<dbReference type="EMBL" id="AP009048">
    <property type="protein sequence ID" value="BAE76198.1"/>
    <property type="molecule type" value="Genomic_DNA"/>
</dbReference>
<dbReference type="PIR" id="A30192">
    <property type="entry name" value="PAECGA"/>
</dbReference>
<dbReference type="PIR" id="B64771">
    <property type="entry name" value="B64771"/>
</dbReference>
<dbReference type="RefSeq" id="NP_414952.1">
    <property type="nucleotide sequence ID" value="NC_000913.3"/>
</dbReference>
<dbReference type="RefSeq" id="WP_000154044.1">
    <property type="nucleotide sequence ID" value="NZ_STEB01000007.1"/>
</dbReference>
<dbReference type="BioGRID" id="4259341">
    <property type="interactions" value="300"/>
</dbReference>
<dbReference type="FunCoup" id="P18200">
    <property type="interactions" value="289"/>
</dbReference>
<dbReference type="STRING" id="511145.b0418"/>
<dbReference type="SwissLipids" id="SLP:000000222"/>
<dbReference type="PaxDb" id="511145-b0418"/>
<dbReference type="EnsemblBacteria" id="AAC73521">
    <property type="protein sequence ID" value="AAC73521"/>
    <property type="gene ID" value="b0418"/>
</dbReference>
<dbReference type="GeneID" id="93777042"/>
<dbReference type="GeneID" id="947542"/>
<dbReference type="KEGG" id="ecj:JW0408"/>
<dbReference type="KEGG" id="eco:b0418"/>
<dbReference type="KEGG" id="ecoc:C3026_02040"/>
<dbReference type="PATRIC" id="fig|1411691.4.peg.1859"/>
<dbReference type="EchoBASE" id="EB0698"/>
<dbReference type="eggNOG" id="COG1267">
    <property type="taxonomic scope" value="Bacteria"/>
</dbReference>
<dbReference type="HOGENOM" id="CLU_103734_0_1_6"/>
<dbReference type="InParanoid" id="P18200"/>
<dbReference type="OMA" id="FFRIYDI"/>
<dbReference type="OrthoDB" id="9804091at2"/>
<dbReference type="PhylomeDB" id="P18200"/>
<dbReference type="BioCyc" id="EcoCyc:PGPPHOSPHAA-MONOMER"/>
<dbReference type="BioCyc" id="MetaCyc:PGPPHOSPHAA-MONOMER"/>
<dbReference type="UniPathway" id="UPA00084">
    <property type="reaction ID" value="UER00504"/>
</dbReference>
<dbReference type="PRO" id="PR:P18200"/>
<dbReference type="Proteomes" id="UP000000625">
    <property type="component" value="Chromosome"/>
</dbReference>
<dbReference type="GO" id="GO:0005886">
    <property type="term" value="C:plasma membrane"/>
    <property type="evidence" value="ECO:0000314"/>
    <property type="project" value="UniProtKB"/>
</dbReference>
<dbReference type="GO" id="GO:0042577">
    <property type="term" value="F:lipid phosphatase activity"/>
    <property type="evidence" value="ECO:0000314"/>
    <property type="project" value="UniProtKB"/>
</dbReference>
<dbReference type="GO" id="GO:0046872">
    <property type="term" value="F:metal ion binding"/>
    <property type="evidence" value="ECO:0007669"/>
    <property type="project" value="UniProtKB-KW"/>
</dbReference>
<dbReference type="GO" id="GO:0008962">
    <property type="term" value="F:phosphatidylglycerophosphatase activity"/>
    <property type="evidence" value="ECO:0000314"/>
    <property type="project" value="UniProtKB"/>
</dbReference>
<dbReference type="GO" id="GO:0046474">
    <property type="term" value="P:glycerophospholipid biosynthetic process"/>
    <property type="evidence" value="ECO:0000315"/>
    <property type="project" value="EcoCyc"/>
</dbReference>
<dbReference type="GO" id="GO:0006655">
    <property type="term" value="P:phosphatidylglycerol biosynthetic process"/>
    <property type="evidence" value="ECO:0000314"/>
    <property type="project" value="UniProtKB"/>
</dbReference>
<dbReference type="GO" id="GO:0009395">
    <property type="term" value="P:phospholipid catabolic process"/>
    <property type="evidence" value="ECO:0007669"/>
    <property type="project" value="UniProtKB-KW"/>
</dbReference>
<dbReference type="GO" id="GO:0046839">
    <property type="term" value="P:phospholipid dephosphorylation"/>
    <property type="evidence" value="ECO:0000314"/>
    <property type="project" value="UniProtKB"/>
</dbReference>
<dbReference type="GO" id="GO:0032026">
    <property type="term" value="P:response to magnesium ion"/>
    <property type="evidence" value="ECO:0000314"/>
    <property type="project" value="UniProtKB"/>
</dbReference>
<dbReference type="CDD" id="cd06971">
    <property type="entry name" value="PgpA"/>
    <property type="match status" value="1"/>
</dbReference>
<dbReference type="InterPro" id="IPR026037">
    <property type="entry name" value="PgpA"/>
</dbReference>
<dbReference type="InterPro" id="IPR036681">
    <property type="entry name" value="PgpA-like_sf"/>
</dbReference>
<dbReference type="InterPro" id="IPR007686">
    <property type="entry name" value="YutG/PgpA"/>
</dbReference>
<dbReference type="NCBIfam" id="NF008288">
    <property type="entry name" value="PRK11068.1"/>
    <property type="match status" value="1"/>
</dbReference>
<dbReference type="PANTHER" id="PTHR36305">
    <property type="entry name" value="PHOSPHATIDYLGLYCEROPHOSPHATASE A"/>
    <property type="match status" value="1"/>
</dbReference>
<dbReference type="PANTHER" id="PTHR36305:SF1">
    <property type="entry name" value="PHOSPHATIDYLGLYCEROPHOSPHATASE A"/>
    <property type="match status" value="1"/>
</dbReference>
<dbReference type="Pfam" id="PF04608">
    <property type="entry name" value="PgpA"/>
    <property type="match status" value="1"/>
</dbReference>
<dbReference type="PIRSF" id="PIRSF006162">
    <property type="entry name" value="PgpA"/>
    <property type="match status" value="1"/>
</dbReference>
<dbReference type="SUPFAM" id="SSF101307">
    <property type="entry name" value="YutG-like"/>
    <property type="match status" value="1"/>
</dbReference>
<accession>P18200</accession>
<accession>P77321</accession>
<accession>Q2MC08</accession>
<sequence>MTILPRHKDVAKSRLKMSNPWHLLAVGFGSGLSPIVPGTMGSLAAIPFWYLMTFLPWQLYSLVVMLGICIGVYLCHQTAKDMGVHDHGSIVWDEFIGMWITLMALPTNDWQWVAAGFVIFRILDMWKPWPIRWFDRNVHGGMGIMIDDIVAGVISAGILYFIGHHWPLGILS</sequence>
<comment type="function">
    <text evidence="2 3 4 5">Lipid phosphatase which dephosphorylates phosphatidylglycerophosphate (PGP) to phosphatidylglycerol (PG).</text>
</comment>
<comment type="catalytic activity">
    <reaction evidence="2 3 4 5">
        <text>a 1,2-diacyl-sn-glycero-3-phospho-(1'-sn-glycero-3'-phosphate) + H2O = a 1,2-diacyl-sn-glycero-3-phospho-(1'-sn-glycerol) + phosphate</text>
        <dbReference type="Rhea" id="RHEA:33751"/>
        <dbReference type="ChEBI" id="CHEBI:15377"/>
        <dbReference type="ChEBI" id="CHEBI:43474"/>
        <dbReference type="ChEBI" id="CHEBI:60110"/>
        <dbReference type="ChEBI" id="CHEBI:64716"/>
        <dbReference type="EC" id="3.1.3.27"/>
    </reaction>
</comment>
<comment type="cofactor">
    <cofactor evidence="3">
        <name>Mg(2+)</name>
        <dbReference type="ChEBI" id="CHEBI:18420"/>
    </cofactor>
</comment>
<comment type="pathway">
    <text>Phospholipid metabolism; phosphatidylglycerol biosynthesis; phosphatidylglycerol from CDP-diacylglycerol: step 2/2.</text>
</comment>
<comment type="subcellular location">
    <subcellularLocation>
        <location evidence="3">Cell inner membrane</location>
        <topology evidence="3">Multi-pass membrane protein</topology>
    </subcellularLocation>
</comment>
<comment type="disruption phenotype">
    <text evidence="3 4 5">Displays 7-10 fold higher levels of phosphatidylglycerophosphate (PGP) than wild-type. Simultaneous deletion of pgpA and pgpB leads to 40 times higher PGP levels compared to wild-type, while simultaneous deletion of pgpA and pgpC leads to almost 100 times higher PGP levels. Lethal when combined with the deletion of both pgpB and pgpC.</text>
</comment>
<comment type="sequence caution" evidence="6">
    <conflict type="frameshift">
        <sequence resource="EMBL-CDS" id="AAA24325"/>
    </conflict>
    <text>In addition, due to translation of the incorrect DNA strand, an unrelated ORF was predicted.</text>
</comment>
<name>PGPA_ECOLI</name>
<protein>
    <recommendedName>
        <fullName>Phosphatidylglycerophosphatase A</fullName>
        <ecNumber>3.1.3.27</ecNumber>
    </recommendedName>
    <alternativeName>
        <fullName>Phosphatidylglycerolphosphate phosphatase A</fullName>
        <shortName>PGP phosphatase A</shortName>
    </alternativeName>
</protein>